<keyword id="KW-0963">Cytoplasm</keyword>
<keyword id="KW-0460">Magnesium</keyword>
<keyword id="KW-0479">Metal-binding</keyword>
<keyword id="KW-0548">Nucleotidyltransferase</keyword>
<keyword id="KW-1185">Reference proteome</keyword>
<keyword id="KW-0694">RNA-binding</keyword>
<keyword id="KW-0808">Transferase</keyword>
<sequence length="716" mass="77090">MTMFNKIVKEFQWGQHKVRLETGEIARQASGAVIVDVEDTVVLATVVGARTAKPGQDFFPLTVDYLEKTYAAGKIPGGFFRREGRPSEGETLISRLIDRPLRPLFPEGFYNEVQVVIHVLSLNPEIPADIPALIGASAALAVSGLPFNGPVGAARVAYINNEYVLNPTRPQMKESALDLIVAGTERAVLMVESEAQQLSEEVMLGGVVFGHEQMQIAIDAIHDLVREGGKPEWDWQPAAKNEPLIARVTELAQADLLAAYQLRDKQARSAKLKEIYAATSAKLEEDAAAGGTVAADKATVGNVLFDIEAKIVRTQILNGEPRIDGRDTRTVRPIEIRTGVLPRTHGSALFTRGETQALVVATLGTKGDEQNIDALEGEYRERFMLHYNMPPFATGETGRVGSPKRREIGHGRLAKRALAACLPSADEFGYSIRVVSEITESNGSSSMASVCGGCLALMDAGVPMKAHVAGIAMGLILEGNKFAVLTDILGDEDHLGDMDFKVAGTEQGVTALQMDIKIQGITREIMQVALAQAKEGRLHILGKMTSAVSGANTVLSDYAPRMITIKINPEKIRDVIGKGGSVIRALTEETGTTIDISDDGVVTIASTSSEGMAEAKKRIENITLEVEVGQVYEGTVLKLLDFGAIVNILPGKDGLLHISEIANERIKDINDYLKDGQQVKVKVIQTDEKGRVRLSAKALLNDAANGAPQGEPTPQQ</sequence>
<evidence type="ECO:0000255" key="1">
    <source>
        <dbReference type="HAMAP-Rule" id="MF_01595"/>
    </source>
</evidence>
<organism>
    <name type="scientific">Paraburkholderia xenovorans (strain LB400)</name>
    <dbReference type="NCBI Taxonomy" id="266265"/>
    <lineage>
        <taxon>Bacteria</taxon>
        <taxon>Pseudomonadati</taxon>
        <taxon>Pseudomonadota</taxon>
        <taxon>Betaproteobacteria</taxon>
        <taxon>Burkholderiales</taxon>
        <taxon>Burkholderiaceae</taxon>
        <taxon>Paraburkholderia</taxon>
    </lineage>
</organism>
<reference key="1">
    <citation type="journal article" date="2006" name="Proc. Natl. Acad. Sci. U.S.A.">
        <title>Burkholderia xenovorans LB400 harbors a multi-replicon, 9.73-Mbp genome shaped for versatility.</title>
        <authorList>
            <person name="Chain P.S.G."/>
            <person name="Denef V.J."/>
            <person name="Konstantinidis K.T."/>
            <person name="Vergez L.M."/>
            <person name="Agullo L."/>
            <person name="Reyes V.L."/>
            <person name="Hauser L."/>
            <person name="Cordova M."/>
            <person name="Gomez L."/>
            <person name="Gonzalez M."/>
            <person name="Land M."/>
            <person name="Lao V."/>
            <person name="Larimer F."/>
            <person name="LiPuma J.J."/>
            <person name="Mahenthiralingam E."/>
            <person name="Malfatti S.A."/>
            <person name="Marx C.J."/>
            <person name="Parnell J.J."/>
            <person name="Ramette A."/>
            <person name="Richardson P."/>
            <person name="Seeger M."/>
            <person name="Smith D."/>
            <person name="Spilker T."/>
            <person name="Sul W.J."/>
            <person name="Tsoi T.V."/>
            <person name="Ulrich L.E."/>
            <person name="Zhulin I.B."/>
            <person name="Tiedje J.M."/>
        </authorList>
    </citation>
    <scope>NUCLEOTIDE SEQUENCE [LARGE SCALE GENOMIC DNA]</scope>
    <source>
        <strain>LB400</strain>
    </source>
</reference>
<comment type="function">
    <text evidence="1">Involved in mRNA degradation. Catalyzes the phosphorolysis of single-stranded polyribonucleotides processively in the 3'- to 5'-direction.</text>
</comment>
<comment type="catalytic activity">
    <reaction evidence="1">
        <text>RNA(n+1) + phosphate = RNA(n) + a ribonucleoside 5'-diphosphate</text>
        <dbReference type="Rhea" id="RHEA:22096"/>
        <dbReference type="Rhea" id="RHEA-COMP:14527"/>
        <dbReference type="Rhea" id="RHEA-COMP:17342"/>
        <dbReference type="ChEBI" id="CHEBI:43474"/>
        <dbReference type="ChEBI" id="CHEBI:57930"/>
        <dbReference type="ChEBI" id="CHEBI:140395"/>
        <dbReference type="EC" id="2.7.7.8"/>
    </reaction>
</comment>
<comment type="cofactor">
    <cofactor evidence="1">
        <name>Mg(2+)</name>
        <dbReference type="ChEBI" id="CHEBI:18420"/>
    </cofactor>
</comment>
<comment type="subcellular location">
    <subcellularLocation>
        <location evidence="1">Cytoplasm</location>
    </subcellularLocation>
</comment>
<comment type="similarity">
    <text evidence="1">Belongs to the polyribonucleotide nucleotidyltransferase family.</text>
</comment>
<accession>Q142H7</accession>
<name>PNP_PARXL</name>
<proteinExistence type="inferred from homology"/>
<gene>
    <name evidence="1" type="primary">pnp</name>
    <name type="ordered locus">Bxeno_A1224</name>
    <name type="ORF">Bxe_A3218</name>
</gene>
<feature type="chain" id="PRO_0000329565" description="Polyribonucleotide nucleotidyltransferase">
    <location>
        <begin position="1"/>
        <end position="716"/>
    </location>
</feature>
<feature type="domain" description="KH" evidence="1">
    <location>
        <begin position="560"/>
        <end position="619"/>
    </location>
</feature>
<feature type="domain" description="S1 motif" evidence="1">
    <location>
        <begin position="629"/>
        <end position="697"/>
    </location>
</feature>
<feature type="binding site" evidence="1">
    <location>
        <position position="493"/>
    </location>
    <ligand>
        <name>Mg(2+)</name>
        <dbReference type="ChEBI" id="CHEBI:18420"/>
    </ligand>
</feature>
<feature type="binding site" evidence="1">
    <location>
        <position position="499"/>
    </location>
    <ligand>
        <name>Mg(2+)</name>
        <dbReference type="ChEBI" id="CHEBI:18420"/>
    </ligand>
</feature>
<protein>
    <recommendedName>
        <fullName evidence="1">Polyribonucleotide nucleotidyltransferase</fullName>
        <ecNumber evidence="1">2.7.7.8</ecNumber>
    </recommendedName>
    <alternativeName>
        <fullName evidence="1">Polynucleotide phosphorylase</fullName>
        <shortName evidence="1">PNPase</shortName>
    </alternativeName>
</protein>
<dbReference type="EC" id="2.7.7.8" evidence="1"/>
<dbReference type="EMBL" id="CP000270">
    <property type="protein sequence ID" value="ABE29762.1"/>
    <property type="molecule type" value="Genomic_DNA"/>
</dbReference>
<dbReference type="RefSeq" id="WP_011487490.1">
    <property type="nucleotide sequence ID" value="NC_007951.1"/>
</dbReference>
<dbReference type="SMR" id="Q142H7"/>
<dbReference type="STRING" id="266265.Bxe_A3218"/>
<dbReference type="KEGG" id="bxb:DR64_921"/>
<dbReference type="KEGG" id="bxe:Bxe_A3218"/>
<dbReference type="eggNOG" id="COG1185">
    <property type="taxonomic scope" value="Bacteria"/>
</dbReference>
<dbReference type="Proteomes" id="UP000001817">
    <property type="component" value="Chromosome 1"/>
</dbReference>
<dbReference type="GO" id="GO:0005829">
    <property type="term" value="C:cytosol"/>
    <property type="evidence" value="ECO:0007669"/>
    <property type="project" value="TreeGrafter"/>
</dbReference>
<dbReference type="GO" id="GO:0000175">
    <property type="term" value="F:3'-5'-RNA exonuclease activity"/>
    <property type="evidence" value="ECO:0007669"/>
    <property type="project" value="TreeGrafter"/>
</dbReference>
<dbReference type="GO" id="GO:0000287">
    <property type="term" value="F:magnesium ion binding"/>
    <property type="evidence" value="ECO:0007669"/>
    <property type="project" value="UniProtKB-UniRule"/>
</dbReference>
<dbReference type="GO" id="GO:0004654">
    <property type="term" value="F:polyribonucleotide nucleotidyltransferase activity"/>
    <property type="evidence" value="ECO:0007669"/>
    <property type="project" value="UniProtKB-UniRule"/>
</dbReference>
<dbReference type="GO" id="GO:0003723">
    <property type="term" value="F:RNA binding"/>
    <property type="evidence" value="ECO:0007669"/>
    <property type="project" value="UniProtKB-UniRule"/>
</dbReference>
<dbReference type="GO" id="GO:0006402">
    <property type="term" value="P:mRNA catabolic process"/>
    <property type="evidence" value="ECO:0007669"/>
    <property type="project" value="UniProtKB-UniRule"/>
</dbReference>
<dbReference type="GO" id="GO:0006396">
    <property type="term" value="P:RNA processing"/>
    <property type="evidence" value="ECO:0007669"/>
    <property type="project" value="InterPro"/>
</dbReference>
<dbReference type="CDD" id="cd02393">
    <property type="entry name" value="KH-I_PNPase"/>
    <property type="match status" value="1"/>
</dbReference>
<dbReference type="CDD" id="cd11363">
    <property type="entry name" value="RNase_PH_PNPase_1"/>
    <property type="match status" value="1"/>
</dbReference>
<dbReference type="CDD" id="cd11364">
    <property type="entry name" value="RNase_PH_PNPase_2"/>
    <property type="match status" value="1"/>
</dbReference>
<dbReference type="CDD" id="cd04472">
    <property type="entry name" value="S1_PNPase"/>
    <property type="match status" value="1"/>
</dbReference>
<dbReference type="FunFam" id="3.30.1370.10:FF:000001">
    <property type="entry name" value="Polyribonucleotide nucleotidyltransferase"/>
    <property type="match status" value="1"/>
</dbReference>
<dbReference type="FunFam" id="3.30.230.70:FF:000001">
    <property type="entry name" value="Polyribonucleotide nucleotidyltransferase"/>
    <property type="match status" value="1"/>
</dbReference>
<dbReference type="FunFam" id="3.30.230.70:FF:000002">
    <property type="entry name" value="Polyribonucleotide nucleotidyltransferase"/>
    <property type="match status" value="1"/>
</dbReference>
<dbReference type="FunFam" id="2.40.50.140:FF:000189">
    <property type="entry name" value="Polyribonucleotide nucleotidyltransferase, putative"/>
    <property type="match status" value="1"/>
</dbReference>
<dbReference type="Gene3D" id="3.30.230.70">
    <property type="entry name" value="GHMP Kinase, N-terminal domain"/>
    <property type="match status" value="2"/>
</dbReference>
<dbReference type="Gene3D" id="3.30.1370.10">
    <property type="entry name" value="K Homology domain, type 1"/>
    <property type="match status" value="1"/>
</dbReference>
<dbReference type="Gene3D" id="2.40.50.140">
    <property type="entry name" value="Nucleic acid-binding proteins"/>
    <property type="match status" value="1"/>
</dbReference>
<dbReference type="HAMAP" id="MF_01595">
    <property type="entry name" value="PNPase"/>
    <property type="match status" value="1"/>
</dbReference>
<dbReference type="InterPro" id="IPR001247">
    <property type="entry name" value="ExoRNase_PH_dom1"/>
</dbReference>
<dbReference type="InterPro" id="IPR015847">
    <property type="entry name" value="ExoRNase_PH_dom2"/>
</dbReference>
<dbReference type="InterPro" id="IPR036345">
    <property type="entry name" value="ExoRNase_PH_dom2_sf"/>
</dbReference>
<dbReference type="InterPro" id="IPR004087">
    <property type="entry name" value="KH_dom"/>
</dbReference>
<dbReference type="InterPro" id="IPR004088">
    <property type="entry name" value="KH_dom_type_1"/>
</dbReference>
<dbReference type="InterPro" id="IPR036612">
    <property type="entry name" value="KH_dom_type_1_sf"/>
</dbReference>
<dbReference type="InterPro" id="IPR012340">
    <property type="entry name" value="NA-bd_OB-fold"/>
</dbReference>
<dbReference type="InterPro" id="IPR012162">
    <property type="entry name" value="PNPase"/>
</dbReference>
<dbReference type="InterPro" id="IPR027408">
    <property type="entry name" value="PNPase/RNase_PH_dom_sf"/>
</dbReference>
<dbReference type="InterPro" id="IPR015848">
    <property type="entry name" value="PNPase_PH_RNA-bd_bac/org-type"/>
</dbReference>
<dbReference type="InterPro" id="IPR020568">
    <property type="entry name" value="Ribosomal_Su5_D2-typ_SF"/>
</dbReference>
<dbReference type="InterPro" id="IPR003029">
    <property type="entry name" value="S1_domain"/>
</dbReference>
<dbReference type="NCBIfam" id="TIGR03591">
    <property type="entry name" value="polynuc_phos"/>
    <property type="match status" value="1"/>
</dbReference>
<dbReference type="NCBIfam" id="NF008805">
    <property type="entry name" value="PRK11824.1"/>
    <property type="match status" value="1"/>
</dbReference>
<dbReference type="PANTHER" id="PTHR11252">
    <property type="entry name" value="POLYRIBONUCLEOTIDE NUCLEOTIDYLTRANSFERASE"/>
    <property type="match status" value="1"/>
</dbReference>
<dbReference type="PANTHER" id="PTHR11252:SF0">
    <property type="entry name" value="POLYRIBONUCLEOTIDE NUCLEOTIDYLTRANSFERASE 1, MITOCHONDRIAL"/>
    <property type="match status" value="1"/>
</dbReference>
<dbReference type="Pfam" id="PF00013">
    <property type="entry name" value="KH_1"/>
    <property type="match status" value="1"/>
</dbReference>
<dbReference type="Pfam" id="PF03726">
    <property type="entry name" value="PNPase"/>
    <property type="match status" value="1"/>
</dbReference>
<dbReference type="Pfam" id="PF01138">
    <property type="entry name" value="RNase_PH"/>
    <property type="match status" value="2"/>
</dbReference>
<dbReference type="Pfam" id="PF03725">
    <property type="entry name" value="RNase_PH_C"/>
    <property type="match status" value="2"/>
</dbReference>
<dbReference type="Pfam" id="PF00575">
    <property type="entry name" value="S1"/>
    <property type="match status" value="1"/>
</dbReference>
<dbReference type="PIRSF" id="PIRSF005499">
    <property type="entry name" value="PNPase"/>
    <property type="match status" value="1"/>
</dbReference>
<dbReference type="SMART" id="SM00322">
    <property type="entry name" value="KH"/>
    <property type="match status" value="1"/>
</dbReference>
<dbReference type="SMART" id="SM00316">
    <property type="entry name" value="S1"/>
    <property type="match status" value="1"/>
</dbReference>
<dbReference type="SUPFAM" id="SSF54791">
    <property type="entry name" value="Eukaryotic type KH-domain (KH-domain type I)"/>
    <property type="match status" value="1"/>
</dbReference>
<dbReference type="SUPFAM" id="SSF50249">
    <property type="entry name" value="Nucleic acid-binding proteins"/>
    <property type="match status" value="1"/>
</dbReference>
<dbReference type="SUPFAM" id="SSF55666">
    <property type="entry name" value="Ribonuclease PH domain 2-like"/>
    <property type="match status" value="2"/>
</dbReference>
<dbReference type="SUPFAM" id="SSF54211">
    <property type="entry name" value="Ribosomal protein S5 domain 2-like"/>
    <property type="match status" value="2"/>
</dbReference>
<dbReference type="PROSITE" id="PS50084">
    <property type="entry name" value="KH_TYPE_1"/>
    <property type="match status" value="1"/>
</dbReference>
<dbReference type="PROSITE" id="PS50126">
    <property type="entry name" value="S1"/>
    <property type="match status" value="1"/>
</dbReference>